<proteinExistence type="evidence at transcript level"/>
<accession>P50256</accession>
<comment type="function">
    <text>This protein promotes the GTP-dependent binding of aminoacyl-tRNA to the A-site of ribosomes during protein biosynthesis.</text>
</comment>
<comment type="subcellular location">
    <subcellularLocation>
        <location>Cytoplasm</location>
    </subcellularLocation>
</comment>
<comment type="developmental stage">
    <text>Expressed in both sporophyte and gametophyte phases of the life cycle.</text>
</comment>
<comment type="similarity">
    <text evidence="3">Belongs to the TRAFAC class translation factor GTPase superfamily. Classic translation factor GTPase family. EF-Tu/EF-1A subfamily.</text>
</comment>
<feature type="chain" id="PRO_0000090943" description="Elongation factor 1-alpha C">
    <location>
        <begin position="1"/>
        <end position="449"/>
    </location>
</feature>
<feature type="domain" description="tr-type G">
    <location>
        <begin position="5"/>
        <end position="234"/>
    </location>
</feature>
<feature type="region of interest" description="G1" evidence="1">
    <location>
        <begin position="14"/>
        <end position="21"/>
    </location>
</feature>
<feature type="region of interest" description="G2" evidence="1">
    <location>
        <begin position="70"/>
        <end position="74"/>
    </location>
</feature>
<feature type="region of interest" description="G3" evidence="1">
    <location>
        <begin position="91"/>
        <end position="94"/>
    </location>
</feature>
<feature type="region of interest" description="G4" evidence="1">
    <location>
        <begin position="153"/>
        <end position="156"/>
    </location>
</feature>
<feature type="region of interest" description="G5" evidence="1">
    <location>
        <begin position="194"/>
        <end position="196"/>
    </location>
</feature>
<feature type="binding site" evidence="1">
    <location>
        <begin position="14"/>
        <end position="21"/>
    </location>
    <ligand>
        <name>GTP</name>
        <dbReference type="ChEBI" id="CHEBI:37565"/>
    </ligand>
</feature>
<feature type="binding site" evidence="1">
    <location>
        <begin position="91"/>
        <end position="95"/>
    </location>
    <ligand>
        <name>GTP</name>
        <dbReference type="ChEBI" id="CHEBI:37565"/>
    </ligand>
</feature>
<feature type="binding site" evidence="1">
    <location>
        <begin position="153"/>
        <end position="156"/>
    </location>
    <ligand>
        <name>GTP</name>
        <dbReference type="ChEBI" id="CHEBI:37565"/>
    </ligand>
</feature>
<feature type="modified residue" description="N6,N6-dimethyllysine" evidence="2">
    <location>
        <position position="55"/>
    </location>
</feature>
<feature type="modified residue" description="N6,N6,N6-trimethyllysine" evidence="2">
    <location>
        <position position="79"/>
    </location>
</feature>
<feature type="modified residue" description="N6,N6,N6-trimethyllysine" evidence="2">
    <location>
        <position position="187"/>
    </location>
</feature>
<feature type="modified residue" description="N6-methyllysine" evidence="2">
    <location>
        <position position="265"/>
    </location>
</feature>
<feature type="modified residue" description="N6,N6,N6-trimethyllysine" evidence="2">
    <location>
        <position position="310"/>
    </location>
</feature>
<feature type="modified residue" description="N6,N6,N6-trimethyllysine" evidence="2">
    <location>
        <position position="400"/>
    </location>
</feature>
<sequence length="449" mass="49174">MGKEKQHVSIVVIGHVDSGKSTTTGHLIYKCGGIDKRAIEKFEKEAAEMGKGSFKYAWVLDKLKAERERGITIDIALWKFETDKYNFTIIDAPGHRDFIKNMITGTSQADLAILVIASPPGEFEAGISQNGQTREHALLAYTLGVKQMIVACNKMDDKNVNWSKERYEEVSKEMDLYLKKVGYNPPKVPKVPTSGWTGENLFERTGGDHALGKWYKGPCLLEALDACDPPKRPVDKPLRLPLQDVYKIGGIGTVPVGRVETGVIKPGMVVTFAPSGLSTEVKSVEMHHEALTQAGPGDNVGFNVKNVSVKDLKRGYVCGDSKNDPPKGCASFNAQVIILNHPGEIHAGYAPVLDCHTAHIACKFSELILKMDRRSGKKLEDSPKMIKSGDAAMVKMVASKPMCVEAFTSYPPLGRFAVRDMRQTVAVGVIKSVEKKEVEGKMTKSAAKK</sequence>
<keyword id="KW-0963">Cytoplasm</keyword>
<keyword id="KW-0251">Elongation factor</keyword>
<keyword id="KW-0342">GTP-binding</keyword>
<keyword id="KW-0488">Methylation</keyword>
<keyword id="KW-0547">Nucleotide-binding</keyword>
<keyword id="KW-0648">Protein biosynthesis</keyword>
<dbReference type="EMBL" id="U08844">
    <property type="protein sequence ID" value="AAA61793.1"/>
    <property type="molecule type" value="mRNA"/>
</dbReference>
<dbReference type="SMR" id="P50256"/>
<dbReference type="GO" id="GO:0005737">
    <property type="term" value="C:cytoplasm"/>
    <property type="evidence" value="ECO:0007669"/>
    <property type="project" value="UniProtKB-SubCell"/>
</dbReference>
<dbReference type="GO" id="GO:0005525">
    <property type="term" value="F:GTP binding"/>
    <property type="evidence" value="ECO:0007669"/>
    <property type="project" value="UniProtKB-KW"/>
</dbReference>
<dbReference type="GO" id="GO:0003924">
    <property type="term" value="F:GTPase activity"/>
    <property type="evidence" value="ECO:0007669"/>
    <property type="project" value="InterPro"/>
</dbReference>
<dbReference type="GO" id="GO:0003746">
    <property type="term" value="F:translation elongation factor activity"/>
    <property type="evidence" value="ECO:0007669"/>
    <property type="project" value="UniProtKB-KW"/>
</dbReference>
<dbReference type="CDD" id="cd01883">
    <property type="entry name" value="EF1_alpha"/>
    <property type="match status" value="1"/>
</dbReference>
<dbReference type="CDD" id="cd03693">
    <property type="entry name" value="EF1_alpha_II"/>
    <property type="match status" value="1"/>
</dbReference>
<dbReference type="CDD" id="cd03705">
    <property type="entry name" value="EF1_alpha_III"/>
    <property type="match status" value="1"/>
</dbReference>
<dbReference type="FunFam" id="2.40.30.10:FF:000003">
    <property type="entry name" value="Elongation factor 1-alpha"/>
    <property type="match status" value="1"/>
</dbReference>
<dbReference type="FunFam" id="2.40.30.10:FF:000005">
    <property type="entry name" value="Elongation factor 1-alpha"/>
    <property type="match status" value="1"/>
</dbReference>
<dbReference type="FunFam" id="3.40.50.300:FF:000255">
    <property type="entry name" value="Elongation factor 1-alpha"/>
    <property type="match status" value="1"/>
</dbReference>
<dbReference type="Gene3D" id="3.40.50.300">
    <property type="entry name" value="P-loop containing nucleotide triphosphate hydrolases"/>
    <property type="match status" value="1"/>
</dbReference>
<dbReference type="Gene3D" id="2.40.30.10">
    <property type="entry name" value="Translation factors"/>
    <property type="match status" value="2"/>
</dbReference>
<dbReference type="HAMAP" id="MF_00118_A">
    <property type="entry name" value="EF_Tu_A"/>
    <property type="match status" value="1"/>
</dbReference>
<dbReference type="InterPro" id="IPR004161">
    <property type="entry name" value="EFTu-like_2"/>
</dbReference>
<dbReference type="InterPro" id="IPR031157">
    <property type="entry name" value="G_TR_CS"/>
</dbReference>
<dbReference type="InterPro" id="IPR054696">
    <property type="entry name" value="GTP-eEF1A_C"/>
</dbReference>
<dbReference type="InterPro" id="IPR027417">
    <property type="entry name" value="P-loop_NTPase"/>
</dbReference>
<dbReference type="InterPro" id="IPR000795">
    <property type="entry name" value="T_Tr_GTP-bd_dom"/>
</dbReference>
<dbReference type="InterPro" id="IPR050100">
    <property type="entry name" value="TRAFAC_GTPase_members"/>
</dbReference>
<dbReference type="InterPro" id="IPR009000">
    <property type="entry name" value="Transl_B-barrel_sf"/>
</dbReference>
<dbReference type="InterPro" id="IPR009001">
    <property type="entry name" value="Transl_elong_EF1A/Init_IF2_C"/>
</dbReference>
<dbReference type="InterPro" id="IPR004539">
    <property type="entry name" value="Transl_elong_EF1A_euk/arc"/>
</dbReference>
<dbReference type="NCBIfam" id="TIGR00483">
    <property type="entry name" value="EF-1_alpha"/>
    <property type="match status" value="1"/>
</dbReference>
<dbReference type="NCBIfam" id="NF008969">
    <property type="entry name" value="PRK12317.1"/>
    <property type="match status" value="1"/>
</dbReference>
<dbReference type="PANTHER" id="PTHR23115">
    <property type="entry name" value="TRANSLATION FACTOR"/>
    <property type="match status" value="1"/>
</dbReference>
<dbReference type="Pfam" id="PF22594">
    <property type="entry name" value="GTP-eEF1A_C"/>
    <property type="match status" value="1"/>
</dbReference>
<dbReference type="Pfam" id="PF00009">
    <property type="entry name" value="GTP_EFTU"/>
    <property type="match status" value="1"/>
</dbReference>
<dbReference type="Pfam" id="PF03144">
    <property type="entry name" value="GTP_EFTU_D2"/>
    <property type="match status" value="1"/>
</dbReference>
<dbReference type="PRINTS" id="PR00315">
    <property type="entry name" value="ELONGATNFCT"/>
</dbReference>
<dbReference type="SUPFAM" id="SSF50465">
    <property type="entry name" value="EF-Tu/eEF-1alpha/eIF2-gamma C-terminal domain"/>
    <property type="match status" value="1"/>
</dbReference>
<dbReference type="SUPFAM" id="SSF52540">
    <property type="entry name" value="P-loop containing nucleoside triphosphate hydrolases"/>
    <property type="match status" value="1"/>
</dbReference>
<dbReference type="SUPFAM" id="SSF50447">
    <property type="entry name" value="Translation proteins"/>
    <property type="match status" value="1"/>
</dbReference>
<dbReference type="PROSITE" id="PS00301">
    <property type="entry name" value="G_TR_1"/>
    <property type="match status" value="1"/>
</dbReference>
<dbReference type="PROSITE" id="PS51722">
    <property type="entry name" value="G_TR_2"/>
    <property type="match status" value="1"/>
</dbReference>
<organism>
    <name type="scientific">Porphyra purpurea</name>
    <name type="common">Red seaweed</name>
    <name type="synonym">Ulva purpurea</name>
    <dbReference type="NCBI Taxonomy" id="2787"/>
    <lineage>
        <taxon>Eukaryota</taxon>
        <taxon>Rhodophyta</taxon>
        <taxon>Bangiophyceae</taxon>
        <taxon>Bangiales</taxon>
        <taxon>Bangiaceae</taxon>
        <taxon>Porphyra</taxon>
    </lineage>
</organism>
<name>EF1AC_PORPU</name>
<reference key="1">
    <citation type="journal article" date="1996" name="Plant Mol. Biol.">
        <title>Elongation factor 1 alpha genes of the red alga Porphyra purpurea include a novel, developmentally specialized variant.</title>
        <authorList>
            <person name="Liu Q.Y."/>
            <person name="Baldauf S.L."/>
            <person name="Reith M.E."/>
        </authorList>
    </citation>
    <scope>NUCLEOTIDE SEQUENCE [MRNA]</scope>
    <source>
        <strain>Avonport</strain>
    </source>
</reference>
<protein>
    <recommendedName>
        <fullName>Elongation factor 1-alpha C</fullName>
        <shortName>EF-1-alpha C</shortName>
    </recommendedName>
</protein>
<gene>
    <name type="primary">TEF-C</name>
</gene>
<evidence type="ECO:0000250" key="1"/>
<evidence type="ECO:0000250" key="2">
    <source>
        <dbReference type="UniProtKB" id="Q8GTY0"/>
    </source>
</evidence>
<evidence type="ECO:0000305" key="3"/>